<proteinExistence type="inferred from homology"/>
<accession>O84585</accession>
<feature type="chain" id="PRO_0000100963" description="Threonine--tRNA ligase">
    <location>
        <begin position="1"/>
        <end position="635"/>
    </location>
</feature>
<feature type="domain" description="TGS" evidence="2">
    <location>
        <begin position="1"/>
        <end position="58"/>
    </location>
</feature>
<feature type="region of interest" description="Catalytic" evidence="1">
    <location>
        <begin position="237"/>
        <end position="528"/>
    </location>
</feature>
<feature type="binding site" evidence="1">
    <location>
        <position position="328"/>
    </location>
    <ligand>
        <name>Zn(2+)</name>
        <dbReference type="ChEBI" id="CHEBI:29105"/>
    </ligand>
</feature>
<feature type="binding site" evidence="1">
    <location>
        <position position="379"/>
    </location>
    <ligand>
        <name>Zn(2+)</name>
        <dbReference type="ChEBI" id="CHEBI:29105"/>
    </ligand>
</feature>
<feature type="binding site" evidence="1">
    <location>
        <position position="505"/>
    </location>
    <ligand>
        <name>Zn(2+)</name>
        <dbReference type="ChEBI" id="CHEBI:29105"/>
    </ligand>
</feature>
<keyword id="KW-0030">Aminoacyl-tRNA synthetase</keyword>
<keyword id="KW-0067">ATP-binding</keyword>
<keyword id="KW-0963">Cytoplasm</keyword>
<keyword id="KW-0436">Ligase</keyword>
<keyword id="KW-0479">Metal-binding</keyword>
<keyword id="KW-0547">Nucleotide-binding</keyword>
<keyword id="KW-0648">Protein biosynthesis</keyword>
<keyword id="KW-1185">Reference proteome</keyword>
<keyword id="KW-0694">RNA-binding</keyword>
<keyword id="KW-0820">tRNA-binding</keyword>
<keyword id="KW-0862">Zinc</keyword>
<reference key="1">
    <citation type="journal article" date="1998" name="Science">
        <title>Genome sequence of an obligate intracellular pathogen of humans: Chlamydia trachomatis.</title>
        <authorList>
            <person name="Stephens R.S."/>
            <person name="Kalman S."/>
            <person name="Lammel C.J."/>
            <person name="Fan J."/>
            <person name="Marathe R."/>
            <person name="Aravind L."/>
            <person name="Mitchell W.P."/>
            <person name="Olinger L."/>
            <person name="Tatusov R.L."/>
            <person name="Zhao Q."/>
            <person name="Koonin E.V."/>
            <person name="Davis R.W."/>
        </authorList>
    </citation>
    <scope>NUCLEOTIDE SEQUENCE [LARGE SCALE GENOMIC DNA]</scope>
    <source>
        <strain>ATCC VR-885 / DSM 19411 / UW-3/Cx</strain>
    </source>
</reference>
<organism>
    <name type="scientific">Chlamydia trachomatis serovar D (strain ATCC VR-885 / DSM 19411 / UW-3/Cx)</name>
    <dbReference type="NCBI Taxonomy" id="272561"/>
    <lineage>
        <taxon>Bacteria</taxon>
        <taxon>Pseudomonadati</taxon>
        <taxon>Chlamydiota</taxon>
        <taxon>Chlamydiia</taxon>
        <taxon>Chlamydiales</taxon>
        <taxon>Chlamydiaceae</taxon>
        <taxon>Chlamydia/Chlamydophila group</taxon>
        <taxon>Chlamydia</taxon>
    </lineage>
</organism>
<evidence type="ECO:0000255" key="1">
    <source>
        <dbReference type="HAMAP-Rule" id="MF_00184"/>
    </source>
</evidence>
<evidence type="ECO:0000255" key="2">
    <source>
        <dbReference type="PROSITE-ProRule" id="PRU01228"/>
    </source>
</evidence>
<name>SYT_CHLTR</name>
<comment type="function">
    <text evidence="1">Catalyzes the attachment of threonine to tRNA(Thr) in a two-step reaction: L-threonine is first activated by ATP to form Thr-AMP and then transferred to the acceptor end of tRNA(Thr). Also edits incorrectly charged L-seryl-tRNA(Thr).</text>
</comment>
<comment type="catalytic activity">
    <reaction evidence="1">
        <text>tRNA(Thr) + L-threonine + ATP = L-threonyl-tRNA(Thr) + AMP + diphosphate + H(+)</text>
        <dbReference type="Rhea" id="RHEA:24624"/>
        <dbReference type="Rhea" id="RHEA-COMP:9670"/>
        <dbReference type="Rhea" id="RHEA-COMP:9704"/>
        <dbReference type="ChEBI" id="CHEBI:15378"/>
        <dbReference type="ChEBI" id="CHEBI:30616"/>
        <dbReference type="ChEBI" id="CHEBI:33019"/>
        <dbReference type="ChEBI" id="CHEBI:57926"/>
        <dbReference type="ChEBI" id="CHEBI:78442"/>
        <dbReference type="ChEBI" id="CHEBI:78534"/>
        <dbReference type="ChEBI" id="CHEBI:456215"/>
        <dbReference type="EC" id="6.1.1.3"/>
    </reaction>
</comment>
<comment type="cofactor">
    <cofactor evidence="1">
        <name>Zn(2+)</name>
        <dbReference type="ChEBI" id="CHEBI:29105"/>
    </cofactor>
    <text evidence="1">Binds 1 zinc ion per subunit.</text>
</comment>
<comment type="subunit">
    <text evidence="1">Homodimer.</text>
</comment>
<comment type="subcellular location">
    <subcellularLocation>
        <location evidence="1">Cytoplasm</location>
    </subcellularLocation>
</comment>
<comment type="similarity">
    <text evidence="1">Belongs to the class-II aminoacyl-tRNA synthetase family.</text>
</comment>
<dbReference type="EC" id="6.1.1.3" evidence="1"/>
<dbReference type="EMBL" id="AE001273">
    <property type="protein sequence ID" value="AAC68183.2"/>
    <property type="molecule type" value="Genomic_DNA"/>
</dbReference>
<dbReference type="PIR" id="G71497">
    <property type="entry name" value="G71497"/>
</dbReference>
<dbReference type="RefSeq" id="NP_220096.1">
    <property type="nucleotide sequence ID" value="NC_000117.1"/>
</dbReference>
<dbReference type="RefSeq" id="WP_009871947.1">
    <property type="nucleotide sequence ID" value="NC_000117.1"/>
</dbReference>
<dbReference type="SMR" id="O84585"/>
<dbReference type="FunCoup" id="O84585">
    <property type="interactions" value="273"/>
</dbReference>
<dbReference type="STRING" id="272561.CT_581"/>
<dbReference type="EnsemblBacteria" id="AAC68183">
    <property type="protein sequence ID" value="AAC68183"/>
    <property type="gene ID" value="CT_581"/>
</dbReference>
<dbReference type="GeneID" id="884359"/>
<dbReference type="KEGG" id="ctr:CT_581"/>
<dbReference type="PATRIC" id="fig|272561.5.peg.633"/>
<dbReference type="HOGENOM" id="CLU_008554_0_1_0"/>
<dbReference type="InParanoid" id="O84585"/>
<dbReference type="OrthoDB" id="9802304at2"/>
<dbReference type="Proteomes" id="UP000000431">
    <property type="component" value="Chromosome"/>
</dbReference>
<dbReference type="GO" id="GO:0005737">
    <property type="term" value="C:cytoplasm"/>
    <property type="evidence" value="ECO:0007669"/>
    <property type="project" value="UniProtKB-SubCell"/>
</dbReference>
<dbReference type="GO" id="GO:0005524">
    <property type="term" value="F:ATP binding"/>
    <property type="evidence" value="ECO:0007669"/>
    <property type="project" value="UniProtKB-UniRule"/>
</dbReference>
<dbReference type="GO" id="GO:0046872">
    <property type="term" value="F:metal ion binding"/>
    <property type="evidence" value="ECO:0007669"/>
    <property type="project" value="UniProtKB-KW"/>
</dbReference>
<dbReference type="GO" id="GO:0004829">
    <property type="term" value="F:threonine-tRNA ligase activity"/>
    <property type="evidence" value="ECO:0000318"/>
    <property type="project" value="GO_Central"/>
</dbReference>
<dbReference type="GO" id="GO:0000049">
    <property type="term" value="F:tRNA binding"/>
    <property type="evidence" value="ECO:0007669"/>
    <property type="project" value="UniProtKB-KW"/>
</dbReference>
<dbReference type="GO" id="GO:0006435">
    <property type="term" value="P:threonyl-tRNA aminoacylation"/>
    <property type="evidence" value="ECO:0000318"/>
    <property type="project" value="GO_Central"/>
</dbReference>
<dbReference type="CDD" id="cd00860">
    <property type="entry name" value="ThrRS_anticodon"/>
    <property type="match status" value="1"/>
</dbReference>
<dbReference type="CDD" id="cd00771">
    <property type="entry name" value="ThrRS_core"/>
    <property type="match status" value="1"/>
</dbReference>
<dbReference type="FunFam" id="3.30.930.10:FF:000019">
    <property type="entry name" value="Threonine--tRNA ligase"/>
    <property type="match status" value="1"/>
</dbReference>
<dbReference type="FunFam" id="3.40.50.800:FF:000001">
    <property type="entry name" value="Threonine--tRNA ligase"/>
    <property type="match status" value="1"/>
</dbReference>
<dbReference type="FunFam" id="3.30.980.10:FF:000005">
    <property type="entry name" value="Threonyl-tRNA synthetase, mitochondrial"/>
    <property type="match status" value="1"/>
</dbReference>
<dbReference type="Gene3D" id="3.10.20.30">
    <property type="match status" value="1"/>
</dbReference>
<dbReference type="Gene3D" id="3.30.54.20">
    <property type="match status" value="1"/>
</dbReference>
<dbReference type="Gene3D" id="3.40.50.800">
    <property type="entry name" value="Anticodon-binding domain"/>
    <property type="match status" value="1"/>
</dbReference>
<dbReference type="Gene3D" id="3.30.930.10">
    <property type="entry name" value="Bira Bifunctional Protein, Domain 2"/>
    <property type="match status" value="1"/>
</dbReference>
<dbReference type="Gene3D" id="3.30.980.10">
    <property type="entry name" value="Threonyl-trna Synthetase, Chain A, domain 2"/>
    <property type="match status" value="1"/>
</dbReference>
<dbReference type="HAMAP" id="MF_00184">
    <property type="entry name" value="Thr_tRNA_synth"/>
    <property type="match status" value="1"/>
</dbReference>
<dbReference type="InterPro" id="IPR002314">
    <property type="entry name" value="aa-tRNA-synt_IIb"/>
</dbReference>
<dbReference type="InterPro" id="IPR006195">
    <property type="entry name" value="aa-tRNA-synth_II"/>
</dbReference>
<dbReference type="InterPro" id="IPR045864">
    <property type="entry name" value="aa-tRNA-synth_II/BPL/LPL"/>
</dbReference>
<dbReference type="InterPro" id="IPR004154">
    <property type="entry name" value="Anticodon-bd"/>
</dbReference>
<dbReference type="InterPro" id="IPR036621">
    <property type="entry name" value="Anticodon-bd_dom_sf"/>
</dbReference>
<dbReference type="InterPro" id="IPR012675">
    <property type="entry name" value="Beta-grasp_dom_sf"/>
</dbReference>
<dbReference type="InterPro" id="IPR004095">
    <property type="entry name" value="TGS"/>
</dbReference>
<dbReference type="InterPro" id="IPR002320">
    <property type="entry name" value="Thr-tRNA-ligase_IIa"/>
</dbReference>
<dbReference type="InterPro" id="IPR018163">
    <property type="entry name" value="Thr/Ala-tRNA-synth_IIc_edit"/>
</dbReference>
<dbReference type="InterPro" id="IPR047246">
    <property type="entry name" value="ThrRS_anticodon"/>
</dbReference>
<dbReference type="InterPro" id="IPR033728">
    <property type="entry name" value="ThrRS_core"/>
</dbReference>
<dbReference type="InterPro" id="IPR012947">
    <property type="entry name" value="tRNA_SAD"/>
</dbReference>
<dbReference type="NCBIfam" id="TIGR00418">
    <property type="entry name" value="thrS"/>
    <property type="match status" value="1"/>
</dbReference>
<dbReference type="PANTHER" id="PTHR11451:SF44">
    <property type="entry name" value="THREONINE--TRNA LIGASE, CHLOROPLASTIC_MITOCHONDRIAL 2"/>
    <property type="match status" value="1"/>
</dbReference>
<dbReference type="PANTHER" id="PTHR11451">
    <property type="entry name" value="THREONINE-TRNA LIGASE"/>
    <property type="match status" value="1"/>
</dbReference>
<dbReference type="Pfam" id="PF03129">
    <property type="entry name" value="HGTP_anticodon"/>
    <property type="match status" value="1"/>
</dbReference>
<dbReference type="Pfam" id="PF02824">
    <property type="entry name" value="TGS"/>
    <property type="match status" value="1"/>
</dbReference>
<dbReference type="Pfam" id="PF00587">
    <property type="entry name" value="tRNA-synt_2b"/>
    <property type="match status" value="1"/>
</dbReference>
<dbReference type="Pfam" id="PF07973">
    <property type="entry name" value="tRNA_SAD"/>
    <property type="match status" value="1"/>
</dbReference>
<dbReference type="PRINTS" id="PR01047">
    <property type="entry name" value="TRNASYNTHTHR"/>
</dbReference>
<dbReference type="SMART" id="SM00863">
    <property type="entry name" value="tRNA_SAD"/>
    <property type="match status" value="1"/>
</dbReference>
<dbReference type="SUPFAM" id="SSF52954">
    <property type="entry name" value="Class II aaRS ABD-related"/>
    <property type="match status" value="1"/>
</dbReference>
<dbReference type="SUPFAM" id="SSF55681">
    <property type="entry name" value="Class II aaRS and biotin synthetases"/>
    <property type="match status" value="1"/>
</dbReference>
<dbReference type="SUPFAM" id="SSF55186">
    <property type="entry name" value="ThrRS/AlaRS common domain"/>
    <property type="match status" value="1"/>
</dbReference>
<dbReference type="PROSITE" id="PS50862">
    <property type="entry name" value="AA_TRNA_LIGASE_II"/>
    <property type="match status" value="1"/>
</dbReference>
<dbReference type="PROSITE" id="PS51880">
    <property type="entry name" value="TGS"/>
    <property type="match status" value="1"/>
</dbReference>
<protein>
    <recommendedName>
        <fullName evidence="1">Threonine--tRNA ligase</fullName>
        <ecNumber evidence="1">6.1.1.3</ecNumber>
    </recommendedName>
    <alternativeName>
        <fullName evidence="1">Threonyl-tRNA synthetase</fullName>
        <shortName evidence="1">ThrRS</shortName>
    </alternativeName>
</protein>
<gene>
    <name evidence="1" type="primary">thrS</name>
    <name type="ordered locus">CT_581</name>
</gene>
<sequence length="635" mass="72601">MIHVTCNQEAFELPEGASAMDLANKMKQSHCFAGALINDQEKDLSTTLQDGDTVLFLTWDDPKGREIFLHTSAHILAQAVLRLWPSAQPTIGPVIDQGFYYDFANLSISEEDFPAIEAMAKTIAEEKFPISRQVFPDKEAALAYFSQNPFKAELIAELPEEVEISAYTQGEFLDLCRGPHLPSTAPVKAFKLLRTSSAYWKGDPSRESLIRIYGVSFPTTKELKEHLHQLEEAKKRDHRVLGTKLDLFSQQTCSAGMPFFHPRGMVVWNALVDYWKRLHQRAGYQQIQTPQLMNRELWEISGHWENYKENMYTLTVDEEDYAIKPMNCPGCMLYYKTQLHSYREFPLRIAEIGHVHRHELSGALSGLMRVRTFHQDDAHVFLTPEQVEEETLNILNLVSELYGTFGLEYHLELSTRPEQGTIGSDDLWELATKALKRALVKSQKPFIISPGEGAFYGPKIDIHVKDAINRTWQCGTIQLDMFLPERFDLKYTNAQGEKSTPIMLHRALFGSIERFLGILIEHFKGRFPLWLSPEHVRIITVADRHEARAQELAKHFSQMGIIVSVDSSNESVSKKIRNAQNMQVNYMITIGDKELETHLLAVRTRDNRVLNDIAVEQFSHVILEELRSLSLTPSL</sequence>